<accession>Q09302</accession>
<proteinExistence type="predicted"/>
<sequence>MRTQTFPPSSSSSRTTHPKKNRHSSNSSSMALVTPAKSSTGAAPKQSSQSGWDYWTRVYSDDAQTTGTPRDVRISDMLSSESLIRAKLLFLNVPSLPSAHKNIILNLVKRELNHDISIQDVVVVPPAKWFLNFYRPEDALKVMKHLNGYSYRGHILAVRFCYPDGTYGDESALTELVQCTNSAKGRILEKKDIVQDTFAVECWTKTEFDSLKVFEKELTNLLKAHAYLPYHTVLQSMRNLFTCKVQSELSSMFISDALAQWPTGLIRIFNRNVKVVSNTMCLSSSSYYTQRIHDSALEGGCSVHRNSWEPTVPDDIRSEVQLIQYTNSFLGHFGPQNIDVDIPIRILAQSLRGTWPKTGPKLAALLTEISSGFVLINRVLYLSSNLHHHEKIIDNLACFQDDCTDVYFLPLSCTTEDQKGKTVDYEDI</sequence>
<organism>
    <name type="scientific">Caenorhabditis elegans</name>
    <dbReference type="NCBI Taxonomy" id="6239"/>
    <lineage>
        <taxon>Eukaryota</taxon>
        <taxon>Metazoa</taxon>
        <taxon>Ecdysozoa</taxon>
        <taxon>Nematoda</taxon>
        <taxon>Chromadorea</taxon>
        <taxon>Rhabditida</taxon>
        <taxon>Rhabditina</taxon>
        <taxon>Rhabditomorpha</taxon>
        <taxon>Rhabditoidea</taxon>
        <taxon>Rhabditidae</taxon>
        <taxon>Peloderinae</taxon>
        <taxon>Caenorhabditis</taxon>
    </lineage>
</organism>
<gene>
    <name type="ORF">F07F6.1</name>
</gene>
<name>YQP1_CAEEL</name>
<dbReference type="EMBL" id="FO081043">
    <property type="protein sequence ID" value="CCD68746.1"/>
    <property type="molecule type" value="Genomic_DNA"/>
</dbReference>
<dbReference type="PIR" id="T15966">
    <property type="entry name" value="T15966"/>
</dbReference>
<dbReference type="RefSeq" id="NP_495032.1">
    <property type="nucleotide sequence ID" value="NM_062631.6"/>
</dbReference>
<dbReference type="SMR" id="Q09302"/>
<dbReference type="FunCoup" id="Q09302">
    <property type="interactions" value="178"/>
</dbReference>
<dbReference type="IntAct" id="Q09302">
    <property type="interactions" value="1"/>
</dbReference>
<dbReference type="STRING" id="6239.F07F6.1.1"/>
<dbReference type="PaxDb" id="6239-F07F6.1"/>
<dbReference type="EnsemblMetazoa" id="F07F6.1.1">
    <property type="protein sequence ID" value="F07F6.1.1"/>
    <property type="gene ID" value="WBGene00017215"/>
</dbReference>
<dbReference type="GeneID" id="173928"/>
<dbReference type="KEGG" id="cel:CELE_F07F6.1"/>
<dbReference type="UCSC" id="F07F6.1">
    <property type="organism name" value="c. elegans"/>
</dbReference>
<dbReference type="AGR" id="WB:WBGene00017215"/>
<dbReference type="CTD" id="173928"/>
<dbReference type="WormBase" id="F07F6.1">
    <property type="protein sequence ID" value="CE01894"/>
    <property type="gene ID" value="WBGene00017215"/>
</dbReference>
<dbReference type="eggNOG" id="ENOG502SRMG">
    <property type="taxonomic scope" value="Eukaryota"/>
</dbReference>
<dbReference type="HOGENOM" id="CLU_664383_0_0_1"/>
<dbReference type="InParanoid" id="Q09302"/>
<dbReference type="OMA" id="FRMCAPQ"/>
<dbReference type="OrthoDB" id="5778082at2759"/>
<dbReference type="PRO" id="PR:Q09302"/>
<dbReference type="Proteomes" id="UP000001940">
    <property type="component" value="Chromosome II"/>
</dbReference>
<dbReference type="Bgee" id="WBGene00017215">
    <property type="expression patterns" value="Expressed in adult organism and 1 other cell type or tissue"/>
</dbReference>
<dbReference type="GO" id="GO:0003676">
    <property type="term" value="F:nucleic acid binding"/>
    <property type="evidence" value="ECO:0007669"/>
    <property type="project" value="InterPro"/>
</dbReference>
<dbReference type="InterPro" id="IPR035979">
    <property type="entry name" value="RBD_domain_sf"/>
</dbReference>
<dbReference type="SUPFAM" id="SSF54928">
    <property type="entry name" value="RNA-binding domain, RBD"/>
    <property type="match status" value="1"/>
</dbReference>
<evidence type="ECO:0000256" key="1">
    <source>
        <dbReference type="SAM" id="MobiDB-lite"/>
    </source>
</evidence>
<protein>
    <recommendedName>
        <fullName>Uncharacterized protein F07F6.1</fullName>
    </recommendedName>
</protein>
<keyword id="KW-1185">Reference proteome</keyword>
<feature type="chain" id="PRO_0000065277" description="Uncharacterized protein F07F6.1">
    <location>
        <begin position="1"/>
        <end position="428"/>
    </location>
</feature>
<feature type="region of interest" description="Disordered" evidence="1">
    <location>
        <begin position="1"/>
        <end position="49"/>
    </location>
</feature>
<feature type="compositionally biased region" description="Polar residues" evidence="1">
    <location>
        <begin position="24"/>
        <end position="49"/>
    </location>
</feature>
<reference key="1">
    <citation type="journal article" date="1998" name="Science">
        <title>Genome sequence of the nematode C. elegans: a platform for investigating biology.</title>
        <authorList>
            <consortium name="The C. elegans sequencing consortium"/>
        </authorList>
    </citation>
    <scope>NUCLEOTIDE SEQUENCE [LARGE SCALE GENOMIC DNA]</scope>
    <source>
        <strain>Bristol N2</strain>
    </source>
</reference>